<name>PAND_RALPJ</name>
<gene>
    <name evidence="1" type="primary">panD</name>
    <name type="ordered locus">Rpic_2970</name>
</gene>
<organism>
    <name type="scientific">Ralstonia pickettii (strain 12J)</name>
    <dbReference type="NCBI Taxonomy" id="402626"/>
    <lineage>
        <taxon>Bacteria</taxon>
        <taxon>Pseudomonadati</taxon>
        <taxon>Pseudomonadota</taxon>
        <taxon>Betaproteobacteria</taxon>
        <taxon>Burkholderiales</taxon>
        <taxon>Burkholderiaceae</taxon>
        <taxon>Ralstonia</taxon>
    </lineage>
</organism>
<feature type="chain" id="PRO_1000124861" description="Aspartate 1-decarboxylase beta chain" evidence="1">
    <location>
        <begin position="1"/>
        <end position="24"/>
    </location>
</feature>
<feature type="chain" id="PRO_1000124862" description="Aspartate 1-decarboxylase alpha chain" evidence="1">
    <location>
        <begin position="25"/>
        <end position="120"/>
    </location>
</feature>
<feature type="active site" description="Schiff-base intermediate with substrate; via pyruvic acid" evidence="1">
    <location>
        <position position="25"/>
    </location>
</feature>
<feature type="active site" description="Proton donor" evidence="1">
    <location>
        <position position="58"/>
    </location>
</feature>
<feature type="binding site" evidence="1">
    <location>
        <position position="57"/>
    </location>
    <ligand>
        <name>substrate</name>
    </ligand>
</feature>
<feature type="binding site" evidence="1">
    <location>
        <begin position="73"/>
        <end position="75"/>
    </location>
    <ligand>
        <name>substrate</name>
    </ligand>
</feature>
<feature type="modified residue" description="Pyruvic acid (Ser)" evidence="1">
    <location>
        <position position="25"/>
    </location>
</feature>
<sequence>MQRNMLRAKLHRATVTQADLDYEGSCGIDEDLLDAADMREYEKIELYNVNNGERFSTYIIKGKRGSGEISLNGAAARRAHVGDLLIICTYAPMNEEEVASYKPKVVLLGEGNKIKAIKET</sequence>
<accession>B2UC88</accession>
<dbReference type="EC" id="4.1.1.11" evidence="1"/>
<dbReference type="EMBL" id="CP001068">
    <property type="protein sequence ID" value="ACD28093.1"/>
    <property type="molecule type" value="Genomic_DNA"/>
</dbReference>
<dbReference type="SMR" id="B2UC88"/>
<dbReference type="STRING" id="402626.Rpic_2970"/>
<dbReference type="KEGG" id="rpi:Rpic_2970"/>
<dbReference type="eggNOG" id="COG0853">
    <property type="taxonomic scope" value="Bacteria"/>
</dbReference>
<dbReference type="HOGENOM" id="CLU_115305_2_1_4"/>
<dbReference type="UniPathway" id="UPA00028">
    <property type="reaction ID" value="UER00002"/>
</dbReference>
<dbReference type="GO" id="GO:0005829">
    <property type="term" value="C:cytosol"/>
    <property type="evidence" value="ECO:0007669"/>
    <property type="project" value="TreeGrafter"/>
</dbReference>
<dbReference type="GO" id="GO:0004068">
    <property type="term" value="F:aspartate 1-decarboxylase activity"/>
    <property type="evidence" value="ECO:0007669"/>
    <property type="project" value="UniProtKB-UniRule"/>
</dbReference>
<dbReference type="GO" id="GO:0006523">
    <property type="term" value="P:alanine biosynthetic process"/>
    <property type="evidence" value="ECO:0007669"/>
    <property type="project" value="InterPro"/>
</dbReference>
<dbReference type="GO" id="GO:0015940">
    <property type="term" value="P:pantothenate biosynthetic process"/>
    <property type="evidence" value="ECO:0007669"/>
    <property type="project" value="UniProtKB-UniRule"/>
</dbReference>
<dbReference type="CDD" id="cd06919">
    <property type="entry name" value="Asp_decarbox"/>
    <property type="match status" value="1"/>
</dbReference>
<dbReference type="Gene3D" id="2.40.40.20">
    <property type="match status" value="1"/>
</dbReference>
<dbReference type="HAMAP" id="MF_00446">
    <property type="entry name" value="PanD"/>
    <property type="match status" value="1"/>
</dbReference>
<dbReference type="InterPro" id="IPR009010">
    <property type="entry name" value="Asp_de-COase-like_dom_sf"/>
</dbReference>
<dbReference type="InterPro" id="IPR003190">
    <property type="entry name" value="Asp_decarbox"/>
</dbReference>
<dbReference type="NCBIfam" id="TIGR00223">
    <property type="entry name" value="panD"/>
    <property type="match status" value="1"/>
</dbReference>
<dbReference type="PANTHER" id="PTHR21012">
    <property type="entry name" value="ASPARTATE 1-DECARBOXYLASE"/>
    <property type="match status" value="1"/>
</dbReference>
<dbReference type="PANTHER" id="PTHR21012:SF0">
    <property type="entry name" value="ASPARTATE 1-DECARBOXYLASE"/>
    <property type="match status" value="1"/>
</dbReference>
<dbReference type="Pfam" id="PF02261">
    <property type="entry name" value="Asp_decarbox"/>
    <property type="match status" value="1"/>
</dbReference>
<dbReference type="PIRSF" id="PIRSF006246">
    <property type="entry name" value="Asp_decarbox"/>
    <property type="match status" value="1"/>
</dbReference>
<dbReference type="SUPFAM" id="SSF50692">
    <property type="entry name" value="ADC-like"/>
    <property type="match status" value="1"/>
</dbReference>
<keyword id="KW-0068">Autocatalytic cleavage</keyword>
<keyword id="KW-0963">Cytoplasm</keyword>
<keyword id="KW-0210">Decarboxylase</keyword>
<keyword id="KW-0456">Lyase</keyword>
<keyword id="KW-0566">Pantothenate biosynthesis</keyword>
<keyword id="KW-0670">Pyruvate</keyword>
<keyword id="KW-0704">Schiff base</keyword>
<keyword id="KW-0865">Zymogen</keyword>
<proteinExistence type="inferred from homology"/>
<protein>
    <recommendedName>
        <fullName evidence="1">Aspartate 1-decarboxylase</fullName>
        <ecNumber evidence="1">4.1.1.11</ecNumber>
    </recommendedName>
    <alternativeName>
        <fullName evidence="1">Aspartate alpha-decarboxylase</fullName>
    </alternativeName>
    <component>
        <recommendedName>
            <fullName evidence="1">Aspartate 1-decarboxylase beta chain</fullName>
        </recommendedName>
    </component>
    <component>
        <recommendedName>
            <fullName evidence="1">Aspartate 1-decarboxylase alpha chain</fullName>
        </recommendedName>
    </component>
</protein>
<evidence type="ECO:0000255" key="1">
    <source>
        <dbReference type="HAMAP-Rule" id="MF_00446"/>
    </source>
</evidence>
<reference key="1">
    <citation type="submission" date="2008-05" db="EMBL/GenBank/DDBJ databases">
        <title>Complete sequence of chromosome 1 of Ralstonia pickettii 12J.</title>
        <authorList>
            <person name="Lucas S."/>
            <person name="Copeland A."/>
            <person name="Lapidus A."/>
            <person name="Glavina del Rio T."/>
            <person name="Dalin E."/>
            <person name="Tice H."/>
            <person name="Bruce D."/>
            <person name="Goodwin L."/>
            <person name="Pitluck S."/>
            <person name="Meincke L."/>
            <person name="Brettin T."/>
            <person name="Detter J.C."/>
            <person name="Han C."/>
            <person name="Kuske C.R."/>
            <person name="Schmutz J."/>
            <person name="Larimer F."/>
            <person name="Land M."/>
            <person name="Hauser L."/>
            <person name="Kyrpides N."/>
            <person name="Mikhailova N."/>
            <person name="Marsh T."/>
            <person name="Richardson P."/>
        </authorList>
    </citation>
    <scope>NUCLEOTIDE SEQUENCE [LARGE SCALE GENOMIC DNA]</scope>
    <source>
        <strain>12J</strain>
    </source>
</reference>
<comment type="function">
    <text evidence="1">Catalyzes the pyruvoyl-dependent decarboxylation of aspartate to produce beta-alanine.</text>
</comment>
<comment type="catalytic activity">
    <reaction evidence="1">
        <text>L-aspartate + H(+) = beta-alanine + CO2</text>
        <dbReference type="Rhea" id="RHEA:19497"/>
        <dbReference type="ChEBI" id="CHEBI:15378"/>
        <dbReference type="ChEBI" id="CHEBI:16526"/>
        <dbReference type="ChEBI" id="CHEBI:29991"/>
        <dbReference type="ChEBI" id="CHEBI:57966"/>
        <dbReference type="EC" id="4.1.1.11"/>
    </reaction>
</comment>
<comment type="cofactor">
    <cofactor evidence="1">
        <name>pyruvate</name>
        <dbReference type="ChEBI" id="CHEBI:15361"/>
    </cofactor>
    <text evidence="1">Binds 1 pyruvoyl group covalently per subunit.</text>
</comment>
<comment type="pathway">
    <text evidence="1">Cofactor biosynthesis; (R)-pantothenate biosynthesis; beta-alanine from L-aspartate: step 1/1.</text>
</comment>
<comment type="subunit">
    <text evidence="1">Heterooctamer of four alpha and four beta subunits.</text>
</comment>
<comment type="subcellular location">
    <subcellularLocation>
        <location evidence="1">Cytoplasm</location>
    </subcellularLocation>
</comment>
<comment type="PTM">
    <text evidence="1">Is synthesized initially as an inactive proenzyme, which is activated by self-cleavage at a specific serine bond to produce a beta-subunit with a hydroxyl group at its C-terminus and an alpha-subunit with a pyruvoyl group at its N-terminus.</text>
</comment>
<comment type="similarity">
    <text evidence="1">Belongs to the PanD family.</text>
</comment>